<evidence type="ECO:0000255" key="1">
    <source>
        <dbReference type="HAMAP-Rule" id="MF_01301"/>
    </source>
</evidence>
<reference key="1">
    <citation type="journal article" date="2008" name="J. Bacteriol.">
        <title>The complete genome sequence of Escherichia coli DH10B: insights into the biology of a laboratory workhorse.</title>
        <authorList>
            <person name="Durfee T."/>
            <person name="Nelson R."/>
            <person name="Baldwin S."/>
            <person name="Plunkett G. III"/>
            <person name="Burland V."/>
            <person name="Mau B."/>
            <person name="Petrosino J.F."/>
            <person name="Qin X."/>
            <person name="Muzny D.M."/>
            <person name="Ayele M."/>
            <person name="Gibbs R.A."/>
            <person name="Csorgo B."/>
            <person name="Posfai G."/>
            <person name="Weinstock G.M."/>
            <person name="Blattner F.R."/>
        </authorList>
    </citation>
    <scope>NUCLEOTIDE SEQUENCE [LARGE SCALE GENOMIC DNA]</scope>
    <source>
        <strain>K12 / DH10B</strain>
    </source>
</reference>
<accession>B1XC35</accession>
<feature type="signal peptide" evidence="1">
    <location>
        <begin position="1"/>
        <end position="25"/>
    </location>
</feature>
<feature type="chain" id="PRO_1000140484" description="Maltoporin">
    <location>
        <begin position="26"/>
        <end position="446"/>
    </location>
</feature>
<feature type="site" description="Greasy slide, important in sugar transport" evidence="1">
    <location>
        <position position="31"/>
    </location>
</feature>
<feature type="site" description="Greasy slide, important in sugar transport" evidence="1">
    <location>
        <position position="66"/>
    </location>
</feature>
<feature type="site" description="Greasy slide, important in sugar transport" evidence="1">
    <location>
        <position position="99"/>
    </location>
</feature>
<feature type="site" description="Important in sugar transport" evidence="1">
    <location>
        <position position="143"/>
    </location>
</feature>
<feature type="site" description="Greasy slide, important in sugar transport" evidence="1">
    <location>
        <position position="252"/>
    </location>
</feature>
<feature type="site" description="Greasy slide, important in sugar transport" evidence="1">
    <location>
        <position position="383"/>
    </location>
</feature>
<feature type="site" description="Greasy slide, important in sugar transport" evidence="1">
    <location>
        <position position="445"/>
    </location>
</feature>
<dbReference type="EMBL" id="CP000948">
    <property type="protein sequence ID" value="ACB05035.1"/>
    <property type="molecule type" value="Genomic_DNA"/>
</dbReference>
<dbReference type="RefSeq" id="WP_000973663.1">
    <property type="nucleotide sequence ID" value="NC_010473.1"/>
</dbReference>
<dbReference type="SMR" id="B1XC35"/>
<dbReference type="KEGG" id="ecd:ECDH10B_4225"/>
<dbReference type="HOGENOM" id="CLU_032473_4_1_6"/>
<dbReference type="GO" id="GO:0009279">
    <property type="term" value="C:cell outer membrane"/>
    <property type="evidence" value="ECO:0007669"/>
    <property type="project" value="UniProtKB-SubCell"/>
</dbReference>
<dbReference type="GO" id="GO:0046930">
    <property type="term" value="C:pore complex"/>
    <property type="evidence" value="ECO:0007669"/>
    <property type="project" value="UniProtKB-KW"/>
</dbReference>
<dbReference type="GO" id="GO:0042958">
    <property type="term" value="F:maltodextrin transmembrane transporter activity"/>
    <property type="evidence" value="ECO:0007669"/>
    <property type="project" value="InterPro"/>
</dbReference>
<dbReference type="GO" id="GO:0015481">
    <property type="term" value="F:maltose transporting porin activity"/>
    <property type="evidence" value="ECO:0007669"/>
    <property type="project" value="InterPro"/>
</dbReference>
<dbReference type="GO" id="GO:0006811">
    <property type="term" value="P:monoatomic ion transport"/>
    <property type="evidence" value="ECO:0007669"/>
    <property type="project" value="UniProtKB-KW"/>
</dbReference>
<dbReference type="CDD" id="cd01346">
    <property type="entry name" value="Maltoporin-like"/>
    <property type="match status" value="1"/>
</dbReference>
<dbReference type="FunFam" id="2.40.170.10:FF:000001">
    <property type="entry name" value="Maltoporin"/>
    <property type="match status" value="1"/>
</dbReference>
<dbReference type="Gene3D" id="2.40.170.10">
    <property type="entry name" value="Porin, LamB type"/>
    <property type="match status" value="1"/>
</dbReference>
<dbReference type="HAMAP" id="MF_01301">
    <property type="entry name" value="LamB"/>
    <property type="match status" value="1"/>
</dbReference>
<dbReference type="InterPro" id="IPR050286">
    <property type="entry name" value="G_neg_Bact_CarbUptk_Porin"/>
</dbReference>
<dbReference type="InterPro" id="IPR023738">
    <property type="entry name" value="Maltoporin"/>
</dbReference>
<dbReference type="InterPro" id="IPR003192">
    <property type="entry name" value="Porin_LamB"/>
</dbReference>
<dbReference type="InterPro" id="IPR036998">
    <property type="entry name" value="Porin_LamB_sf"/>
</dbReference>
<dbReference type="NCBIfam" id="NF006860">
    <property type="entry name" value="PRK09360.1"/>
    <property type="match status" value="1"/>
</dbReference>
<dbReference type="PANTHER" id="PTHR38762">
    <property type="entry name" value="CRYPTIC OUTER MEMBRANE PORIN BGLH-RELATED"/>
    <property type="match status" value="1"/>
</dbReference>
<dbReference type="PANTHER" id="PTHR38762:SF1">
    <property type="entry name" value="CRYPTIC OUTER MEMBRANE PORIN BGLH-RELATED"/>
    <property type="match status" value="1"/>
</dbReference>
<dbReference type="Pfam" id="PF02264">
    <property type="entry name" value="LamB"/>
    <property type="match status" value="1"/>
</dbReference>
<dbReference type="SUPFAM" id="SSF56935">
    <property type="entry name" value="Porins"/>
    <property type="match status" value="1"/>
</dbReference>
<sequence length="446" mass="49912">MMITLRKLPLAVAVAAGVMSAQAMAVDFHGYARSGIGWTGSGGEQQCFQTTGAQSKYRLGNECETYAELKLGQEVWKEGDKSFYFDTNVAYSVAQQNDWEATDPAFREANVQGKNLIEWLPGSTIWAGKRFYQRHDVHMIDFYYWDISGPGAGLENIDVGFGKLSLAATRSSEAGGSSSFASNNIYDYTNETANDVFDVRLAQMEINPGGTLELGVDYGRANLRDNYRLVDGASKDGWLFTAEHTQSVLKGFNKFVVQYATDSMTSQGKGLSQGSGVAFDNEKFAYNINNNGHMLRILDHGAISMGDNWDMMYVGMYQDINWDNDNGTKWWTVGIRPMYKWTPIMSTVMEIGYDNVESQRTGDKNNQYKITLAQQWQAGDSIWSRPAIRVFATYAKWDEKWGYDYTGNADNNANFGKAVPADFNGGSFGRGDSDEWTFGAQMEIWW</sequence>
<proteinExistence type="inferred from homology"/>
<gene>
    <name evidence="1" type="primary">lamB</name>
    <name type="ordered locus">ECDH10B_4225</name>
</gene>
<protein>
    <recommendedName>
        <fullName evidence="1">Maltoporin</fullName>
    </recommendedName>
    <alternativeName>
        <fullName evidence="1">Maltose-inducible porin</fullName>
    </alternativeName>
</protein>
<keyword id="KW-0998">Cell outer membrane</keyword>
<keyword id="KW-0406">Ion transport</keyword>
<keyword id="KW-0472">Membrane</keyword>
<keyword id="KW-0626">Porin</keyword>
<keyword id="KW-0732">Signal</keyword>
<keyword id="KW-0762">Sugar transport</keyword>
<keyword id="KW-0812">Transmembrane</keyword>
<keyword id="KW-1134">Transmembrane beta strand</keyword>
<keyword id="KW-0813">Transport</keyword>
<organism>
    <name type="scientific">Escherichia coli (strain K12 / DH10B)</name>
    <dbReference type="NCBI Taxonomy" id="316385"/>
    <lineage>
        <taxon>Bacteria</taxon>
        <taxon>Pseudomonadati</taxon>
        <taxon>Pseudomonadota</taxon>
        <taxon>Gammaproteobacteria</taxon>
        <taxon>Enterobacterales</taxon>
        <taxon>Enterobacteriaceae</taxon>
        <taxon>Escherichia</taxon>
    </lineage>
</organism>
<name>LAMB_ECODH</name>
<comment type="function">
    <text evidence="1">Involved in the transport of maltose and maltodextrins.</text>
</comment>
<comment type="catalytic activity">
    <reaction evidence="1">
        <text>beta-maltose(in) = beta-maltose(out)</text>
        <dbReference type="Rhea" id="RHEA:29731"/>
        <dbReference type="ChEBI" id="CHEBI:18147"/>
    </reaction>
</comment>
<comment type="subunit">
    <text evidence="1">Homotrimer formed of three 18-stranded antiparallel beta-barrels, containing three independent channels.</text>
</comment>
<comment type="subcellular location">
    <subcellularLocation>
        <location evidence="1">Cell outer membrane</location>
        <topology evidence="1">Multi-pass membrane protein</topology>
    </subcellularLocation>
</comment>
<comment type="induction">
    <text evidence="1">By maltose.</text>
</comment>
<comment type="similarity">
    <text evidence="1">Belongs to the porin LamB (TC 1.B.3) family.</text>
</comment>